<proteinExistence type="inferred from homology"/>
<dbReference type="EMBL" id="AE014075">
    <property type="protein sequence ID" value="AAN82854.1"/>
    <property type="molecule type" value="Genomic_DNA"/>
</dbReference>
<dbReference type="RefSeq" id="WP_000228269.1">
    <property type="nucleotide sequence ID" value="NZ_CP051263.1"/>
</dbReference>
<dbReference type="SMR" id="P0AF11"/>
<dbReference type="STRING" id="199310.c4418"/>
<dbReference type="GeneID" id="75173794"/>
<dbReference type="KEGG" id="ecc:c4418"/>
<dbReference type="eggNOG" id="COG3722">
    <property type="taxonomic scope" value="Bacteria"/>
</dbReference>
<dbReference type="HOGENOM" id="CLU_099448_0_0_6"/>
<dbReference type="BioCyc" id="ECOL199310:C4418-MONOMER"/>
<dbReference type="Proteomes" id="UP000001410">
    <property type="component" value="Chromosome"/>
</dbReference>
<dbReference type="GO" id="GO:0045892">
    <property type="term" value="P:negative regulation of DNA-templated transcription"/>
    <property type="evidence" value="ECO:0007669"/>
    <property type="project" value="TreeGrafter"/>
</dbReference>
<dbReference type="FunFam" id="1.20.120.330:FF:000004">
    <property type="entry name" value="Mannitol operon repressor"/>
    <property type="match status" value="1"/>
</dbReference>
<dbReference type="Gene3D" id="1.20.120.330">
    <property type="entry name" value="Nucleotidyltransferases domain 2"/>
    <property type="match status" value="1"/>
</dbReference>
<dbReference type="InterPro" id="IPR007761">
    <property type="entry name" value="MtlR-like"/>
</dbReference>
<dbReference type="InterPro" id="IPR038026">
    <property type="entry name" value="MtlR-like_sf"/>
</dbReference>
<dbReference type="NCBIfam" id="NF008234">
    <property type="entry name" value="PRK11001.1"/>
    <property type="match status" value="1"/>
</dbReference>
<dbReference type="PANTHER" id="PTHR37941">
    <property type="entry name" value="FUMARASE E-RELATED"/>
    <property type="match status" value="1"/>
</dbReference>
<dbReference type="PANTHER" id="PTHR37941:SF1">
    <property type="entry name" value="FUMARASE E-RELATED"/>
    <property type="match status" value="1"/>
</dbReference>
<dbReference type="Pfam" id="PF05068">
    <property type="entry name" value="MtlR"/>
    <property type="match status" value="1"/>
</dbReference>
<dbReference type="SUPFAM" id="SSF158668">
    <property type="entry name" value="MtlR-like"/>
    <property type="match status" value="1"/>
</dbReference>
<protein>
    <recommendedName>
        <fullName evidence="3">Mannitol operon repressor</fullName>
    </recommendedName>
    <alternativeName>
        <fullName evidence="1">Mannitol repressor protein</fullName>
    </alternativeName>
</protein>
<name>MTLR_ECOL6</name>
<keyword id="KW-1185">Reference proteome</keyword>
<keyword id="KW-0678">Repressor</keyword>
<keyword id="KW-0804">Transcription</keyword>
<keyword id="KW-0805">Transcription regulation</keyword>
<organism>
    <name type="scientific">Escherichia coli O6:H1 (strain CFT073 / ATCC 700928 / UPEC)</name>
    <dbReference type="NCBI Taxonomy" id="199310"/>
    <lineage>
        <taxon>Bacteria</taxon>
        <taxon>Pseudomonadati</taxon>
        <taxon>Pseudomonadota</taxon>
        <taxon>Gammaproteobacteria</taxon>
        <taxon>Enterobacterales</taxon>
        <taxon>Enterobacteriaceae</taxon>
        <taxon>Escherichia</taxon>
    </lineage>
</organism>
<accession>P0AF11</accession>
<accession>P36563</accession>
<sequence length="195" mass="21990">MVDQAQDTLRPNNRLSDMQATMEQTQAFENRVLERLNAGKTVRSFLITAVELLTEAVNLLVLQVFRKDDYAVKYAVEPLLDGDGPLGDLSVRLKLIYGLGVINRQEYEDAELLMALREELNHDGNEYAFTDDEILGPFGELHCVAALPPPPQFEPADSSLYAMQIQRYQQAVRSTMVLSLTELISKISLKKAFQK</sequence>
<comment type="function">
    <text evidence="1">Involved in the repression of the expression of the mannitol mtlADR operon. Does not bind the operator/promoter regulatory region of this operon. Therefore, seems to belong to a new class of transcription factors in bacteria that may regulate gene expression indirectly, perhaps as a part of a larger transcriptional complex.</text>
</comment>
<comment type="subunit">
    <text evidence="1">Homodimer. Can also form higher level multimer aggregates.</text>
</comment>
<comment type="similarity">
    <text evidence="2">Belongs to the MtlR/FumE family.</text>
</comment>
<reference key="1">
    <citation type="journal article" date="2002" name="Proc. Natl. Acad. Sci. U.S.A.">
        <title>Extensive mosaic structure revealed by the complete genome sequence of uropathogenic Escherichia coli.</title>
        <authorList>
            <person name="Welch R.A."/>
            <person name="Burland V."/>
            <person name="Plunkett G. III"/>
            <person name="Redford P."/>
            <person name="Roesch P."/>
            <person name="Rasko D."/>
            <person name="Buckles E.L."/>
            <person name="Liou S.-R."/>
            <person name="Boutin A."/>
            <person name="Hackett J."/>
            <person name="Stroud D."/>
            <person name="Mayhew G.F."/>
            <person name="Rose D.J."/>
            <person name="Zhou S."/>
            <person name="Schwartz D.C."/>
            <person name="Perna N.T."/>
            <person name="Mobley H.L.T."/>
            <person name="Donnenberg M.S."/>
            <person name="Blattner F.R."/>
        </authorList>
    </citation>
    <scope>NUCLEOTIDE SEQUENCE [LARGE SCALE GENOMIC DNA]</scope>
    <source>
        <strain>CFT073 / ATCC 700928 / UPEC</strain>
    </source>
</reference>
<evidence type="ECO:0000250" key="1">
    <source>
        <dbReference type="UniProtKB" id="P0AF10"/>
    </source>
</evidence>
<evidence type="ECO:0000305" key="2"/>
<evidence type="ECO:0000312" key="3">
    <source>
        <dbReference type="EMBL" id="AAN82854.1"/>
    </source>
</evidence>
<gene>
    <name evidence="3" type="primary">mtlR</name>
    <name type="ordered locus">c4418</name>
</gene>
<feature type="chain" id="PRO_0000096629" description="Mannitol operon repressor">
    <location>
        <begin position="1"/>
        <end position="195"/>
    </location>
</feature>